<proteinExistence type="inferred from homology"/>
<accession>Q3ZXW1</accession>
<evidence type="ECO:0000255" key="1">
    <source>
        <dbReference type="HAMAP-Rule" id="MF_01043"/>
    </source>
</evidence>
<gene>
    <name evidence="1" type="primary">plsY2</name>
    <name type="ordered locus">cbdbA924</name>
</gene>
<dbReference type="EC" id="2.3.1.275" evidence="1"/>
<dbReference type="EMBL" id="AJ965256">
    <property type="protein sequence ID" value="CAI83055.1"/>
    <property type="molecule type" value="Genomic_DNA"/>
</dbReference>
<dbReference type="RefSeq" id="WP_011309406.1">
    <property type="nucleotide sequence ID" value="NC_007356.1"/>
</dbReference>
<dbReference type="SMR" id="Q3ZXW1"/>
<dbReference type="KEGG" id="deh:cbdbA924"/>
<dbReference type="HOGENOM" id="CLU_081254_7_1_0"/>
<dbReference type="UniPathway" id="UPA00085"/>
<dbReference type="Proteomes" id="UP000000433">
    <property type="component" value="Chromosome"/>
</dbReference>
<dbReference type="GO" id="GO:0005886">
    <property type="term" value="C:plasma membrane"/>
    <property type="evidence" value="ECO:0007669"/>
    <property type="project" value="UniProtKB-SubCell"/>
</dbReference>
<dbReference type="GO" id="GO:0043772">
    <property type="term" value="F:acyl-phosphate glycerol-3-phosphate acyltransferase activity"/>
    <property type="evidence" value="ECO:0007669"/>
    <property type="project" value="UniProtKB-UniRule"/>
</dbReference>
<dbReference type="GO" id="GO:0008654">
    <property type="term" value="P:phospholipid biosynthetic process"/>
    <property type="evidence" value="ECO:0007669"/>
    <property type="project" value="UniProtKB-UniRule"/>
</dbReference>
<dbReference type="HAMAP" id="MF_01043">
    <property type="entry name" value="PlsY"/>
    <property type="match status" value="1"/>
</dbReference>
<dbReference type="InterPro" id="IPR003811">
    <property type="entry name" value="G3P_acylTferase_PlsY"/>
</dbReference>
<dbReference type="NCBIfam" id="NF010990">
    <property type="entry name" value="PRK14414.1"/>
    <property type="match status" value="1"/>
</dbReference>
<dbReference type="PANTHER" id="PTHR30309:SF0">
    <property type="entry name" value="GLYCEROL-3-PHOSPHATE ACYLTRANSFERASE-RELATED"/>
    <property type="match status" value="1"/>
</dbReference>
<dbReference type="PANTHER" id="PTHR30309">
    <property type="entry name" value="INNER MEMBRANE PROTEIN YGIH"/>
    <property type="match status" value="1"/>
</dbReference>
<dbReference type="Pfam" id="PF02660">
    <property type="entry name" value="G3P_acyltransf"/>
    <property type="match status" value="1"/>
</dbReference>
<dbReference type="SMART" id="SM01207">
    <property type="entry name" value="G3P_acyltransf"/>
    <property type="match status" value="1"/>
</dbReference>
<keyword id="KW-1003">Cell membrane</keyword>
<keyword id="KW-0444">Lipid biosynthesis</keyword>
<keyword id="KW-0443">Lipid metabolism</keyword>
<keyword id="KW-0472">Membrane</keyword>
<keyword id="KW-0594">Phospholipid biosynthesis</keyword>
<keyword id="KW-1208">Phospholipid metabolism</keyword>
<keyword id="KW-0808">Transferase</keyword>
<keyword id="KW-0812">Transmembrane</keyword>
<keyword id="KW-1133">Transmembrane helix</keyword>
<sequence length="210" mass="22984">MNSLIMVIIALIAAYFIGSTPAPYLAGRIFKKIDIRTVGSKNMGSMNVFYNVGFWPGILVLTTDIGKGALAMAVANWLGEGLGIQMLCALMAIAGHNYPVWLKFKGGKGGATAIGILAYMMPEGIPIYIACFLILMAITRFPTLSYGISFISFILVAWLGQHDMGKVLFSLLVVMIPILMYIPRMKEIKNKAGSGNAKRAIFRRNLKERL</sequence>
<comment type="function">
    <text evidence="1">Catalyzes the transfer of an acyl group from acyl-phosphate (acyl-PO(4)) to glycerol-3-phosphate (G3P) to form lysophosphatidic acid (LPA). This enzyme utilizes acyl-phosphate as fatty acyl donor, but not acyl-CoA or acyl-ACP.</text>
</comment>
<comment type="catalytic activity">
    <reaction evidence="1">
        <text>an acyl phosphate + sn-glycerol 3-phosphate = a 1-acyl-sn-glycero-3-phosphate + phosphate</text>
        <dbReference type="Rhea" id="RHEA:34075"/>
        <dbReference type="ChEBI" id="CHEBI:43474"/>
        <dbReference type="ChEBI" id="CHEBI:57597"/>
        <dbReference type="ChEBI" id="CHEBI:57970"/>
        <dbReference type="ChEBI" id="CHEBI:59918"/>
        <dbReference type="EC" id="2.3.1.275"/>
    </reaction>
</comment>
<comment type="pathway">
    <text evidence="1">Lipid metabolism; phospholipid metabolism.</text>
</comment>
<comment type="subunit">
    <text evidence="1">Probably interacts with PlsX.</text>
</comment>
<comment type="subcellular location">
    <subcellularLocation>
        <location evidence="1">Cell membrane</location>
        <topology evidence="1">Multi-pass membrane protein</topology>
    </subcellularLocation>
</comment>
<comment type="similarity">
    <text evidence="1">Belongs to the PlsY family.</text>
</comment>
<reference key="1">
    <citation type="journal article" date="2005" name="Nat. Biotechnol.">
        <title>Genome sequence of the chlorinated compound-respiring bacterium Dehalococcoides species strain CBDB1.</title>
        <authorList>
            <person name="Kube M."/>
            <person name="Beck A."/>
            <person name="Zinder S.H."/>
            <person name="Kuhl H."/>
            <person name="Reinhardt R."/>
            <person name="Adrian L."/>
        </authorList>
    </citation>
    <scope>NUCLEOTIDE SEQUENCE [LARGE SCALE GENOMIC DNA]</scope>
    <source>
        <strain>CBDB1</strain>
    </source>
</reference>
<name>PLSY2_DEHMC</name>
<organism>
    <name type="scientific">Dehalococcoides mccartyi (strain CBDB1)</name>
    <dbReference type="NCBI Taxonomy" id="255470"/>
    <lineage>
        <taxon>Bacteria</taxon>
        <taxon>Bacillati</taxon>
        <taxon>Chloroflexota</taxon>
        <taxon>Dehalococcoidia</taxon>
        <taxon>Dehalococcoidales</taxon>
        <taxon>Dehalococcoidaceae</taxon>
        <taxon>Dehalococcoides</taxon>
    </lineage>
</organism>
<protein>
    <recommendedName>
        <fullName evidence="1">Glycerol-3-phosphate acyltransferase 2</fullName>
    </recommendedName>
    <alternativeName>
        <fullName evidence="1">Acyl-PO4 G3P acyltransferase 2</fullName>
    </alternativeName>
    <alternativeName>
        <fullName evidence="1">Acyl-phosphate--glycerol-3-phosphate acyltransferase 2</fullName>
    </alternativeName>
    <alternativeName>
        <fullName evidence="1">G3P acyltransferase 2</fullName>
        <shortName evidence="1">GPAT 2</shortName>
        <ecNumber evidence="1">2.3.1.275</ecNumber>
    </alternativeName>
    <alternativeName>
        <fullName evidence="1">Lysophosphatidic acid synthase 2</fullName>
        <shortName evidence="1">LPA synthase 2</shortName>
    </alternativeName>
</protein>
<feature type="chain" id="PRO_0000188358" description="Glycerol-3-phosphate acyltransferase 2">
    <location>
        <begin position="1"/>
        <end position="210"/>
    </location>
</feature>
<feature type="transmembrane region" description="Helical" evidence="1">
    <location>
        <begin position="4"/>
        <end position="24"/>
    </location>
</feature>
<feature type="transmembrane region" description="Helical" evidence="1">
    <location>
        <begin position="52"/>
        <end position="72"/>
    </location>
</feature>
<feature type="transmembrane region" description="Helical" evidence="1">
    <location>
        <begin position="73"/>
        <end position="93"/>
    </location>
</feature>
<feature type="transmembrane region" description="Helical" evidence="1">
    <location>
        <begin position="114"/>
        <end position="134"/>
    </location>
</feature>
<feature type="transmembrane region" description="Helical" evidence="1">
    <location>
        <begin position="141"/>
        <end position="161"/>
    </location>
</feature>
<feature type="transmembrane region" description="Helical" evidence="1">
    <location>
        <begin position="163"/>
        <end position="183"/>
    </location>
</feature>